<feature type="chain" id="PRO_0000356720" description="Large ribosomal subunit protein bL33B">
    <location>
        <begin position="1"/>
        <end position="50"/>
    </location>
</feature>
<keyword id="KW-0687">Ribonucleoprotein</keyword>
<keyword id="KW-0689">Ribosomal protein</keyword>
<organism>
    <name type="scientific">Streptococcus pyogenes serotype M12 (strain MGAS2096)</name>
    <dbReference type="NCBI Taxonomy" id="370553"/>
    <lineage>
        <taxon>Bacteria</taxon>
        <taxon>Bacillati</taxon>
        <taxon>Bacillota</taxon>
        <taxon>Bacilli</taxon>
        <taxon>Lactobacillales</taxon>
        <taxon>Streptococcaceae</taxon>
        <taxon>Streptococcus</taxon>
    </lineage>
</organism>
<reference key="1">
    <citation type="journal article" date="2006" name="Proc. Natl. Acad. Sci. U.S.A.">
        <title>Molecular genetic anatomy of inter- and intraserotype variation in the human bacterial pathogen group A Streptococcus.</title>
        <authorList>
            <person name="Beres S.B."/>
            <person name="Richter E.W."/>
            <person name="Nagiec M.J."/>
            <person name="Sumby P."/>
            <person name="Porcella S.F."/>
            <person name="DeLeo F.R."/>
            <person name="Musser J.M."/>
        </authorList>
    </citation>
    <scope>NUCLEOTIDE SEQUENCE [LARGE SCALE GENOMIC DNA]</scope>
    <source>
        <strain>MGAS2096</strain>
    </source>
</reference>
<comment type="similarity">
    <text evidence="1">Belongs to the bacterial ribosomal protein bL33 family.</text>
</comment>
<proteinExistence type="inferred from homology"/>
<sequence length="50" mass="5658">MAQKKASLACVECGSRNYSIGVSSTPKPTRLEVNKFCKYCKTYTLHKETR</sequence>
<name>RL332_STRPB</name>
<protein>
    <recommendedName>
        <fullName evidence="1">Large ribosomal subunit protein bL33B</fullName>
    </recommendedName>
    <alternativeName>
        <fullName evidence="1">50S ribosomal protein L33 2</fullName>
    </alternativeName>
</protein>
<accession>Q1J9H3</accession>
<evidence type="ECO:0000255" key="1">
    <source>
        <dbReference type="HAMAP-Rule" id="MF_00294"/>
    </source>
</evidence>
<dbReference type="EMBL" id="CP000261">
    <property type="protein sequence ID" value="ABF36838.1"/>
    <property type="molecule type" value="Genomic_DNA"/>
</dbReference>
<dbReference type="SMR" id="Q1J9H3"/>
<dbReference type="KEGG" id="spj:MGAS2096_Spy1786"/>
<dbReference type="HOGENOM" id="CLU_190949_0_1_9"/>
<dbReference type="GO" id="GO:0005737">
    <property type="term" value="C:cytoplasm"/>
    <property type="evidence" value="ECO:0007669"/>
    <property type="project" value="UniProtKB-ARBA"/>
</dbReference>
<dbReference type="GO" id="GO:1990904">
    <property type="term" value="C:ribonucleoprotein complex"/>
    <property type="evidence" value="ECO:0007669"/>
    <property type="project" value="UniProtKB-KW"/>
</dbReference>
<dbReference type="GO" id="GO:0005840">
    <property type="term" value="C:ribosome"/>
    <property type="evidence" value="ECO:0007669"/>
    <property type="project" value="UniProtKB-KW"/>
</dbReference>
<dbReference type="GO" id="GO:0003735">
    <property type="term" value="F:structural constituent of ribosome"/>
    <property type="evidence" value="ECO:0007669"/>
    <property type="project" value="InterPro"/>
</dbReference>
<dbReference type="GO" id="GO:0006412">
    <property type="term" value="P:translation"/>
    <property type="evidence" value="ECO:0007669"/>
    <property type="project" value="UniProtKB-UniRule"/>
</dbReference>
<dbReference type="Gene3D" id="2.20.28.120">
    <property type="entry name" value="Ribosomal protein L33"/>
    <property type="match status" value="1"/>
</dbReference>
<dbReference type="HAMAP" id="MF_00294">
    <property type="entry name" value="Ribosomal_bL33"/>
    <property type="match status" value="1"/>
</dbReference>
<dbReference type="InterPro" id="IPR001705">
    <property type="entry name" value="Ribosomal_bL33"/>
</dbReference>
<dbReference type="InterPro" id="IPR038584">
    <property type="entry name" value="Ribosomal_bL33_sf"/>
</dbReference>
<dbReference type="InterPro" id="IPR011332">
    <property type="entry name" value="Ribosomal_zn-bd"/>
</dbReference>
<dbReference type="NCBIfam" id="NF001764">
    <property type="entry name" value="PRK00504.1"/>
    <property type="match status" value="1"/>
</dbReference>
<dbReference type="NCBIfam" id="TIGR01023">
    <property type="entry name" value="rpmG_bact"/>
    <property type="match status" value="1"/>
</dbReference>
<dbReference type="Pfam" id="PF00471">
    <property type="entry name" value="Ribosomal_L33"/>
    <property type="match status" value="1"/>
</dbReference>
<dbReference type="SUPFAM" id="SSF57829">
    <property type="entry name" value="Zn-binding ribosomal proteins"/>
    <property type="match status" value="1"/>
</dbReference>
<gene>
    <name evidence="1" type="primary">rpmG2</name>
    <name type="ordered locus">MGAS2096_Spy1786</name>
</gene>